<evidence type="ECO:0000250" key="1"/>
<evidence type="ECO:0000255" key="2"/>
<evidence type="ECO:0000305" key="3"/>
<accession>D7LAP2</accession>
<organism>
    <name type="scientific">Arabidopsis lyrata subsp. lyrata</name>
    <name type="common">Lyre-leaved rock-cress</name>
    <dbReference type="NCBI Taxonomy" id="81972"/>
    <lineage>
        <taxon>Eukaryota</taxon>
        <taxon>Viridiplantae</taxon>
        <taxon>Streptophyta</taxon>
        <taxon>Embryophyta</taxon>
        <taxon>Tracheophyta</taxon>
        <taxon>Spermatophyta</taxon>
        <taxon>Magnoliopsida</taxon>
        <taxon>eudicotyledons</taxon>
        <taxon>Gunneridae</taxon>
        <taxon>Pentapetalae</taxon>
        <taxon>rosids</taxon>
        <taxon>malvids</taxon>
        <taxon>Brassicales</taxon>
        <taxon>Brassicaceae</taxon>
        <taxon>Camelineae</taxon>
        <taxon>Arabidopsis</taxon>
    </lineage>
</organism>
<comment type="function">
    <text evidence="1">Regulates membrane-cell wall junctions and localized cell wall deposition. Required for establishment of the Casparian strip membrane domain (CSD) and the subsequent formation of Casparian strips, a cell wall modification of the root endodermis that determines an apoplastic barrier between the intraorganismal apoplasm and the extraorganismal apoplasm and prevents lateral diffusion (By similarity).</text>
</comment>
<comment type="subunit">
    <text evidence="1">Homodimer and heterodimers.</text>
</comment>
<comment type="subcellular location">
    <subcellularLocation>
        <location evidence="1">Cell membrane</location>
        <topology evidence="1">Multi-pass membrane protein</topology>
    </subcellularLocation>
    <text evidence="1">Very restricted localization following a belt shape within the plasma membrane which coincides with the position of the Casparian strip membrane domain in the root endodermis.</text>
</comment>
<comment type="similarity">
    <text evidence="3">Belongs to the Casparian strip membrane proteins (CASP) family.</text>
</comment>
<sequence>MKNESTTIDVPAESSSAMKGKAPLIGVARDHTTSGSGGYNRGLSIFDFLLRLAAIVAALAAAATMGTSDETLPFFTQFLQFEASYDDLPTFQFFVIAMALVGGYLVLSLPISVVTILRPLATAPRLLLLVLDTAVLALNTAAASSAAAISYLAHSGNQNTNWLPICQQFGDFCQKSSGAVVSAFISVVFFTILVVISGVALKRH</sequence>
<gene>
    <name type="ORF">ARALYDRAFT_478496</name>
</gene>
<name>CASP2_ARALL</name>
<keyword id="KW-1003">Cell membrane</keyword>
<keyword id="KW-0961">Cell wall biogenesis/degradation</keyword>
<keyword id="KW-0472">Membrane</keyword>
<keyword id="KW-1185">Reference proteome</keyword>
<keyword id="KW-0812">Transmembrane</keyword>
<keyword id="KW-1133">Transmembrane helix</keyword>
<protein>
    <recommendedName>
        <fullName>Casparian strip membrane protein 2</fullName>
        <shortName>AlCASP2</shortName>
    </recommendedName>
</protein>
<dbReference type="EMBL" id="GL348715">
    <property type="protein sequence ID" value="EFH58995.1"/>
    <property type="molecule type" value="Genomic_DNA"/>
</dbReference>
<dbReference type="RefSeq" id="XP_002882736.1">
    <property type="nucleotide sequence ID" value="XM_002882690.1"/>
</dbReference>
<dbReference type="SMR" id="D7LAP2"/>
<dbReference type="STRING" id="81972.D7LAP2"/>
<dbReference type="EnsemblPlants" id="fgenesh2_kg.3__1197__AT3G11550.1">
    <property type="protein sequence ID" value="fgenesh2_kg.3__1197__AT3G11550.1"/>
    <property type="gene ID" value="fgenesh2_kg.3__1197__AT3G11550.1"/>
</dbReference>
<dbReference type="Gramene" id="fgenesh2_kg.3__1197__AT3G11550.1">
    <property type="protein sequence ID" value="fgenesh2_kg.3__1197__AT3G11550.1"/>
    <property type="gene ID" value="fgenesh2_kg.3__1197__AT3G11550.1"/>
</dbReference>
<dbReference type="eggNOG" id="ENOG502QZV7">
    <property type="taxonomic scope" value="Eukaryota"/>
</dbReference>
<dbReference type="HOGENOM" id="CLU_066104_3_1_1"/>
<dbReference type="OrthoDB" id="753675at2759"/>
<dbReference type="Proteomes" id="UP000008694">
    <property type="component" value="Unassembled WGS sequence"/>
</dbReference>
<dbReference type="GO" id="GO:0048226">
    <property type="term" value="C:Casparian strip"/>
    <property type="evidence" value="ECO:0007669"/>
    <property type="project" value="EnsemblPlants"/>
</dbReference>
<dbReference type="GO" id="GO:0005886">
    <property type="term" value="C:plasma membrane"/>
    <property type="evidence" value="ECO:0007669"/>
    <property type="project" value="UniProtKB-SubCell"/>
</dbReference>
<dbReference type="GO" id="GO:0042545">
    <property type="term" value="P:cell wall modification"/>
    <property type="evidence" value="ECO:0007669"/>
    <property type="project" value="EnsemblPlants"/>
</dbReference>
<dbReference type="GO" id="GO:0007043">
    <property type="term" value="P:cell-cell junction assembly"/>
    <property type="evidence" value="ECO:0007669"/>
    <property type="project" value="EnsemblPlants"/>
</dbReference>
<dbReference type="InterPro" id="IPR006459">
    <property type="entry name" value="CASP/CASPL"/>
</dbReference>
<dbReference type="InterPro" id="IPR006702">
    <property type="entry name" value="CASP_dom"/>
</dbReference>
<dbReference type="InterPro" id="IPR044173">
    <property type="entry name" value="CASPL"/>
</dbReference>
<dbReference type="NCBIfam" id="TIGR01569">
    <property type="entry name" value="A_tha_TIGR01569"/>
    <property type="match status" value="1"/>
</dbReference>
<dbReference type="PANTHER" id="PTHR36488:SF11">
    <property type="entry name" value="CASP-LIKE PROTEIN"/>
    <property type="match status" value="1"/>
</dbReference>
<dbReference type="PANTHER" id="PTHR36488">
    <property type="entry name" value="CASP-LIKE PROTEIN 1U1"/>
    <property type="match status" value="1"/>
</dbReference>
<dbReference type="Pfam" id="PF04535">
    <property type="entry name" value="CASP_dom"/>
    <property type="match status" value="1"/>
</dbReference>
<feature type="chain" id="PRO_0000411996" description="Casparian strip membrane protein 2">
    <location>
        <begin position="1"/>
        <end position="204"/>
    </location>
</feature>
<feature type="topological domain" description="Cytoplasmic" evidence="2">
    <location>
        <begin position="1"/>
        <end position="42"/>
    </location>
</feature>
<feature type="transmembrane region" description="Helical" evidence="2">
    <location>
        <begin position="43"/>
        <end position="63"/>
    </location>
</feature>
<feature type="topological domain" description="Extracellular" evidence="2">
    <location>
        <begin position="64"/>
        <end position="92"/>
    </location>
</feature>
<feature type="transmembrane region" description="Helical" evidence="2">
    <location>
        <begin position="93"/>
        <end position="113"/>
    </location>
</feature>
<feature type="topological domain" description="Cytoplasmic" evidence="2">
    <location>
        <begin position="114"/>
        <end position="125"/>
    </location>
</feature>
<feature type="transmembrane region" description="Helical" evidence="2">
    <location>
        <begin position="126"/>
        <end position="146"/>
    </location>
</feature>
<feature type="topological domain" description="Extracellular" evidence="2">
    <location>
        <begin position="147"/>
        <end position="178"/>
    </location>
</feature>
<feature type="transmembrane region" description="Helical" evidence="2">
    <location>
        <begin position="179"/>
        <end position="199"/>
    </location>
</feature>
<feature type="topological domain" description="Cytoplasmic" evidence="2">
    <location>
        <begin position="200"/>
        <end position="204"/>
    </location>
</feature>
<proteinExistence type="inferred from homology"/>
<reference key="1">
    <citation type="journal article" date="2011" name="Nat. Genet.">
        <title>The Arabidopsis lyrata genome sequence and the basis of rapid genome size change.</title>
        <authorList>
            <person name="Hu T.T."/>
            <person name="Pattyn P."/>
            <person name="Bakker E.G."/>
            <person name="Cao J."/>
            <person name="Cheng J.-F."/>
            <person name="Clark R.M."/>
            <person name="Fahlgren N."/>
            <person name="Fawcett J.A."/>
            <person name="Grimwood J."/>
            <person name="Gundlach H."/>
            <person name="Haberer G."/>
            <person name="Hollister J.D."/>
            <person name="Ossowski S."/>
            <person name="Ottilar R.P."/>
            <person name="Salamov A.A."/>
            <person name="Schneeberger K."/>
            <person name="Spannagl M."/>
            <person name="Wang X."/>
            <person name="Yang L."/>
            <person name="Nasrallah M.E."/>
            <person name="Bergelson J."/>
            <person name="Carrington J.C."/>
            <person name="Gaut B.S."/>
            <person name="Schmutz J."/>
            <person name="Mayer K.F.X."/>
            <person name="Van de Peer Y."/>
            <person name="Grigoriev I.V."/>
            <person name="Nordborg M."/>
            <person name="Weigel D."/>
            <person name="Guo Y.-L."/>
        </authorList>
    </citation>
    <scope>NUCLEOTIDE SEQUENCE [LARGE SCALE GENOMIC DNA]</scope>
    <source>
        <strain>cv. MN47</strain>
    </source>
</reference>
<reference key="2">
    <citation type="journal article" date="2014" name="Plant Physiol.">
        <title>Functional and evolutionary analysis of the CASPARIAN STRIP MEMBRANE DOMAIN PROTEIN family.</title>
        <authorList>
            <person name="Roppolo D."/>
            <person name="Boeckmann B."/>
            <person name="Pfister A."/>
            <person name="Boutet E."/>
            <person name="Rubio M.C."/>
            <person name="Denervaud-Tendon V."/>
            <person name="Vermeer J.E."/>
            <person name="Gheyselinck J."/>
            <person name="Xenarios I."/>
            <person name="Geldner N."/>
        </authorList>
    </citation>
    <scope>GENE FAMILY</scope>
    <scope>NOMENCLATURE</scope>
</reference>